<evidence type="ECO:0000250" key="1">
    <source>
        <dbReference type="UniProtKB" id="B1A4F7"/>
    </source>
</evidence>
<evidence type="ECO:0000250" key="2">
    <source>
        <dbReference type="UniProtKB" id="P27487"/>
    </source>
</evidence>
<evidence type="ECO:0000255" key="3"/>
<evidence type="ECO:0000255" key="4">
    <source>
        <dbReference type="PROSITE-ProRule" id="PRU10084"/>
    </source>
</evidence>
<evidence type="ECO:0000269" key="5">
    <source>
    </source>
</evidence>
<evidence type="ECO:0000303" key="6">
    <source>
    </source>
</evidence>
<evidence type="ECO:0000305" key="7"/>
<evidence type="ECO:0000305" key="8">
    <source>
    </source>
</evidence>
<dbReference type="EC" id="3.4.14.5" evidence="1 4"/>
<dbReference type="SMR" id="P0DRB8"/>
<dbReference type="GO" id="GO:0005576">
    <property type="term" value="C:extracellular region"/>
    <property type="evidence" value="ECO:0007669"/>
    <property type="project" value="UniProtKB-SubCell"/>
</dbReference>
<dbReference type="GO" id="GO:0005886">
    <property type="term" value="C:plasma membrane"/>
    <property type="evidence" value="ECO:0007669"/>
    <property type="project" value="TreeGrafter"/>
</dbReference>
<dbReference type="GO" id="GO:0004177">
    <property type="term" value="F:aminopeptidase activity"/>
    <property type="evidence" value="ECO:0007669"/>
    <property type="project" value="UniProtKB-KW"/>
</dbReference>
<dbReference type="GO" id="GO:0008239">
    <property type="term" value="F:dipeptidyl-peptidase activity"/>
    <property type="evidence" value="ECO:0007669"/>
    <property type="project" value="TreeGrafter"/>
</dbReference>
<dbReference type="GO" id="GO:0008236">
    <property type="term" value="F:serine-type peptidase activity"/>
    <property type="evidence" value="ECO:0007669"/>
    <property type="project" value="InterPro"/>
</dbReference>
<dbReference type="GO" id="GO:0006508">
    <property type="term" value="P:proteolysis"/>
    <property type="evidence" value="ECO:0007669"/>
    <property type="project" value="UniProtKB-KW"/>
</dbReference>
<dbReference type="FunFam" id="3.40.50.1820:FF:000003">
    <property type="entry name" value="Dipeptidyl peptidase 4"/>
    <property type="match status" value="1"/>
</dbReference>
<dbReference type="Gene3D" id="3.40.50.1820">
    <property type="entry name" value="alpha/beta hydrolase"/>
    <property type="match status" value="1"/>
</dbReference>
<dbReference type="Gene3D" id="2.140.10.30">
    <property type="entry name" value="Dipeptidylpeptidase IV, N-terminal domain"/>
    <property type="match status" value="1"/>
</dbReference>
<dbReference type="InterPro" id="IPR029058">
    <property type="entry name" value="AB_hydrolase_fold"/>
</dbReference>
<dbReference type="InterPro" id="IPR001375">
    <property type="entry name" value="Peptidase_S9_cat"/>
</dbReference>
<dbReference type="InterPro" id="IPR002469">
    <property type="entry name" value="Peptidase_S9B_N"/>
</dbReference>
<dbReference type="InterPro" id="IPR050278">
    <property type="entry name" value="Serine_Prot_S9B/DPPIV"/>
</dbReference>
<dbReference type="PANTHER" id="PTHR11731">
    <property type="entry name" value="PROTEASE FAMILY S9B,C DIPEPTIDYL-PEPTIDASE IV-RELATED"/>
    <property type="match status" value="1"/>
</dbReference>
<dbReference type="PANTHER" id="PTHR11731:SF154">
    <property type="entry name" value="VENOM DIPEPTIDYL PEPTIDASE 4-LIKE PROTEIN"/>
    <property type="match status" value="1"/>
</dbReference>
<dbReference type="Pfam" id="PF00930">
    <property type="entry name" value="DPPIV_N"/>
    <property type="match status" value="1"/>
</dbReference>
<dbReference type="Pfam" id="PF00326">
    <property type="entry name" value="Peptidase_S9"/>
    <property type="match status" value="1"/>
</dbReference>
<dbReference type="SUPFAM" id="SSF53474">
    <property type="entry name" value="alpha/beta-Hydrolases"/>
    <property type="match status" value="1"/>
</dbReference>
<dbReference type="SUPFAM" id="SSF82171">
    <property type="entry name" value="DPP6 N-terminal domain-like"/>
    <property type="match status" value="1"/>
</dbReference>
<proteinExistence type="evidence at protein level"/>
<protein>
    <recommendedName>
        <fullName>Venom dipeptidyl peptidase 4</fullName>
        <ecNumber evidence="1 4">3.4.14.5</ecNumber>
    </recommendedName>
    <alternativeName>
        <fullName evidence="6">Dipeptidylpeptidase IV</fullName>
        <shortName evidence="6">DPPIV</shortName>
    </alternativeName>
    <alternativeName>
        <fullName evidence="6">New Vespv3</fullName>
        <shortName evidence="6">NewVespv3</shortName>
    </alternativeName>
</protein>
<comment type="function">
    <text evidence="1">Venom dipeptidyl-peptidase which removes N-terminal dipeptides sequentially from polypeptides having unsubstituted N-termini provided that the penultimate residue is proline. May process venom proteins into their active forms and/or modulate the chemotactic activity of immune cells after the insect sting.</text>
</comment>
<comment type="catalytic activity">
    <reaction evidence="1 4">
        <text>Release of an N-terminal dipeptide, Xaa-Yaa-|-Zaa-, from a polypeptide, preferentially when Yaa is Pro, provided Zaa is neither Pro nor hydroxyproline.</text>
        <dbReference type="EC" id="3.4.14.5"/>
    </reaction>
</comment>
<comment type="subcellular location">
    <subcellularLocation>
        <location evidence="5">Secreted</location>
    </subcellularLocation>
</comment>
<comment type="tissue specificity">
    <text evidence="8">Expressed by the venom gland.</text>
</comment>
<comment type="allergen">
    <text evidence="5">Causes an allergic reaction in human. Binds to IgE.</text>
</comment>
<comment type="similarity">
    <text evidence="7">Belongs to the peptidase S9B family. DPPIV subfamily.</text>
</comment>
<comment type="online information" name="National Center for Biotechnology Information (NCBI)">
    <link uri="https://www.ncbi.nlm.nih.gov/sra/?term=SRX595647"/>
</comment>
<keyword id="KW-0020">Allergen</keyword>
<keyword id="KW-0031">Aminopeptidase</keyword>
<keyword id="KW-1015">Disulfide bond</keyword>
<keyword id="KW-0325">Glycoprotein</keyword>
<keyword id="KW-0378">Hydrolase</keyword>
<keyword id="KW-0645">Protease</keyword>
<keyword id="KW-0964">Secreted</keyword>
<keyword id="KW-0732">Signal</keyword>
<sequence>MVPLRSFVLLNGLFFVLLAARTVVTRVIDKDNLDGILETQDGQNLSKEPFNLEETYTADFLAYTFNGTWTSDTTIVYTDTMTGDILQFDVIKQRLTVIVDSSVMDDYIVTHYALSPKGRFLLIGYDFQKGFRHSKFMRYVIYDIELGGYDKIANGMHIALAKWAPLTDDLIYILDNDIYYMRFSNNGFNDVQRVTYDGIVGIVYNGVPDWVYEEEVFHGSSAIWFSPDGSHLAYASFDDRNVQEILYLHYGEPGNLVDQYPTEVKIKYPKAGTSNPVVSLTLVDLHDPTLNKIDLKAPIEVVGTDNVLSNVQWKDFDHVIAMWSNRVQNKTEIVWYNKYGEIVKTLDVVEHEGWVEIKNLFFYKDFVYMRKLQPSGTKAGRFHHVTRYDYTLRSSPIQMDLTPGITEVQDIRAIDHSHGRIYYLATGPGEPSQRNLYSVPVDGSEKPTCISCNVLTPEGNACTYADAIFSPFGQHYVLICQGPDPMIVGIFDNTHKKVYSWENNLSLRSKLARRELPLVKDLYVRANGYESKVRLFLPHNFDESKSYPMLVNVYAGPNTAKIIDVASYGYHAYMTTNRSVIYAYIDGRGSSNKGSKMLFEIYRKLGTVEVEDQISVTRKLQEMFPWIDSKRTGVWGWSYGGFCSAMILAKDLTSVFKCGIAVAPVSSWIYYDSIYTERYMGLPTPEDNLGGYNGTDVSRRVEDIRGKKFMLIHGSGDDNVHYQQSLALAKALEKADIMFEQITYTDEAHALFGVLPHLYHTMDRFWSDCFSLSHAH</sequence>
<name>VDDP4_VESVE</name>
<organism>
    <name type="scientific">Vespa velutina</name>
    <name type="common">Asian yellow-legged hornet</name>
    <dbReference type="NCBI Taxonomy" id="202808"/>
    <lineage>
        <taxon>Eukaryota</taxon>
        <taxon>Metazoa</taxon>
        <taxon>Ecdysozoa</taxon>
        <taxon>Arthropoda</taxon>
        <taxon>Hexapoda</taxon>
        <taxon>Insecta</taxon>
        <taxon>Pterygota</taxon>
        <taxon>Neoptera</taxon>
        <taxon>Endopterygota</taxon>
        <taxon>Hymenoptera</taxon>
        <taxon>Apocrita</taxon>
        <taxon>Aculeata</taxon>
        <taxon>Vespoidea</taxon>
        <taxon>Vespidae</taxon>
        <taxon>Vespinae</taxon>
        <taxon>Vespa</taxon>
    </lineage>
</organism>
<feature type="signal peptide" evidence="3">
    <location>
        <begin position="1"/>
        <end position="19"/>
    </location>
</feature>
<feature type="chain" id="PRO_0000459799" description="Venom dipeptidyl peptidase 4">
    <location>
        <begin position="20"/>
        <end position="776"/>
    </location>
</feature>
<feature type="active site" description="Charge relay system" evidence="4">
    <location>
        <position position="638"/>
    </location>
</feature>
<feature type="active site" description="Charge relay system" evidence="4">
    <location>
        <position position="717"/>
    </location>
</feature>
<feature type="active site" description="Charge relay system" evidence="4">
    <location>
        <position position="749"/>
    </location>
</feature>
<feature type="glycosylation site" description="N-linked (GlcNAc...) asparagine" evidence="3">
    <location>
        <position position="44"/>
    </location>
</feature>
<feature type="glycosylation site" description="N-linked (GlcNAc...) asparagine" evidence="3">
    <location>
        <position position="66"/>
    </location>
</feature>
<feature type="glycosylation site" description="N-linked (GlcNAc...) asparagine" evidence="3">
    <location>
        <position position="329"/>
    </location>
</feature>
<feature type="glycosylation site" description="N-linked (GlcNAc...) asparagine" evidence="3">
    <location>
        <position position="504"/>
    </location>
</feature>
<feature type="glycosylation site" description="N-linked (GlcNAc...) asparagine" evidence="3">
    <location>
        <position position="577"/>
    </location>
</feature>
<feature type="glycosylation site" description="N-linked (GlcNAc...) asparagine" evidence="3">
    <location>
        <position position="693"/>
    </location>
</feature>
<feature type="disulfide bond" evidence="2">
    <location>
        <begin position="449"/>
        <end position="452"/>
    </location>
</feature>
<feature type="disulfide bond" evidence="2">
    <location>
        <begin position="462"/>
        <end position="480"/>
    </location>
</feature>
<feature type="disulfide bond" evidence="2">
    <location>
        <begin position="658"/>
        <end position="769"/>
    </location>
</feature>
<accession>P0DRB8</accession>
<reference key="1">
    <citation type="journal article" date="2015" name="Sci. Rep.">
        <title>Deciphering the venomic transcriptome of killer-wasp Vespa velutina.</title>
        <authorList>
            <person name="Liu Z."/>
            <person name="Chen S."/>
            <person name="Zhou Y."/>
            <person name="Xie C."/>
            <person name="Zhu B."/>
            <person name="Zhu H."/>
            <person name="Liu S."/>
            <person name="Wang W."/>
            <person name="Chen H."/>
            <person name="Ji Y."/>
        </authorList>
    </citation>
    <scope>NUCLEOTIDE SEQUENCE [LARGE SCALE MRNA]</scope>
    <source>
        <tissue>Venom gland</tissue>
    </source>
</reference>
<reference key="2">
    <citation type="journal article" date="2023" name="Toxins">
        <title>Structural similarities, in relation with the cross-reactivity, of hymenoptera allergenic dipeptidyl peptidases IV - An overall comparison including a new dipeptidyl peptidase IV sequence from Vespa velutina.</title>
        <authorList>
            <person name="Monsalve R.I."/>
            <person name="Lombardero M."/>
            <person name="Christensen L.H."/>
            <person name="Nunez-Acevedo B."/>
            <person name="Gonzalez-de-Olano D."/>
            <person name="Sobrino-Garcia M."/>
            <person name="Castillo-Loja R.M."/>
            <person name="Bravo S.B."/>
            <person name="Alonso-Sampedro M."/>
            <person name="Vidal C."/>
        </authorList>
    </citation>
    <scope>ALLERGEN</scope>
    <scope>IDENTIFICATION BY MASS SPECTROMETRY</scope>
    <scope>SUBCELLULAR LOCATION</scope>
    <source>
        <tissue>Venom</tissue>
    </source>
</reference>